<feature type="chain" id="PRO_0000072129" description="Spore maturation protein A">
    <location>
        <begin position="1"/>
        <end position="196"/>
    </location>
</feature>
<feature type="transmembrane region" description="Helical" evidence="1">
    <location>
        <begin position="1"/>
        <end position="21"/>
    </location>
</feature>
<feature type="transmembrane region" description="Helical" evidence="1">
    <location>
        <begin position="37"/>
        <end position="57"/>
    </location>
</feature>
<feature type="transmembrane region" description="Helical" evidence="1">
    <location>
        <begin position="133"/>
        <end position="153"/>
    </location>
</feature>
<feature type="transmembrane region" description="Helical" evidence="1">
    <location>
        <begin position="163"/>
        <end position="183"/>
    </location>
</feature>
<name>SPMA_BACSU</name>
<keyword id="KW-1003">Cell membrane</keyword>
<keyword id="KW-0472">Membrane</keyword>
<keyword id="KW-1185">Reference proteome</keyword>
<keyword id="KW-0749">Sporulation</keyword>
<keyword id="KW-0812">Transmembrane</keyword>
<keyword id="KW-1133">Transmembrane helix</keyword>
<accession>P35157</accession>
<evidence type="ECO:0000255" key="1"/>
<evidence type="ECO:0000305" key="2"/>
<proteinExistence type="evidence at protein level"/>
<gene>
    <name type="primary">spmA</name>
    <name type="synonym">ypuJ</name>
    <name type="ordered locus">BSU23180</name>
</gene>
<dbReference type="EMBL" id="L09228">
    <property type="protein sequence ID" value="AAA67491.1"/>
    <property type="molecule type" value="Genomic_DNA"/>
</dbReference>
<dbReference type="EMBL" id="M84227">
    <property type="status" value="NOT_ANNOTATED_CDS"/>
    <property type="molecule type" value="Genomic_DNA"/>
</dbReference>
<dbReference type="EMBL" id="AL009126">
    <property type="protein sequence ID" value="CAB14250.1"/>
    <property type="molecule type" value="Genomic_DNA"/>
</dbReference>
<dbReference type="PIR" id="S45553">
    <property type="entry name" value="S45553"/>
</dbReference>
<dbReference type="RefSeq" id="NP_390199.1">
    <property type="nucleotide sequence ID" value="NC_000964.3"/>
</dbReference>
<dbReference type="RefSeq" id="WP_004398980.1">
    <property type="nucleotide sequence ID" value="NZ_OZ025638.1"/>
</dbReference>
<dbReference type="FunCoup" id="P35157">
    <property type="interactions" value="33"/>
</dbReference>
<dbReference type="STRING" id="224308.BSU23180"/>
<dbReference type="PaxDb" id="224308-BSU23180"/>
<dbReference type="EnsemblBacteria" id="CAB14250">
    <property type="protein sequence ID" value="CAB14250"/>
    <property type="gene ID" value="BSU_23180"/>
</dbReference>
<dbReference type="GeneID" id="938954"/>
<dbReference type="KEGG" id="bsu:BSU23180"/>
<dbReference type="PATRIC" id="fig|224308.179.peg.2525"/>
<dbReference type="eggNOG" id="COG2715">
    <property type="taxonomic scope" value="Bacteria"/>
</dbReference>
<dbReference type="InParanoid" id="P35157"/>
<dbReference type="OrthoDB" id="9782481at2"/>
<dbReference type="PhylomeDB" id="P35157"/>
<dbReference type="BioCyc" id="BSUB:BSU23180-MONOMER"/>
<dbReference type="Proteomes" id="UP000001570">
    <property type="component" value="Chromosome"/>
</dbReference>
<dbReference type="GO" id="GO:0005886">
    <property type="term" value="C:plasma membrane"/>
    <property type="evidence" value="ECO:0007669"/>
    <property type="project" value="UniProtKB-SubCell"/>
</dbReference>
<dbReference type="GO" id="GO:0030435">
    <property type="term" value="P:sporulation resulting in formation of a cellular spore"/>
    <property type="evidence" value="ECO:0007669"/>
    <property type="project" value="UniProtKB-KW"/>
</dbReference>
<dbReference type="InterPro" id="IPR011642">
    <property type="entry name" value="Gate_dom"/>
</dbReference>
<dbReference type="Pfam" id="PF07670">
    <property type="entry name" value="Gate"/>
    <property type="match status" value="1"/>
</dbReference>
<reference key="1">
    <citation type="journal article" date="1993" name="Mol. Microbiol.">
        <title>The organization of the Bacillus subtilis 168 chromosome region between the spoVA and serA genetic loci, based on sequence data.</title>
        <authorList>
            <person name="Sorokin A.V."/>
            <person name="Zumstein E."/>
            <person name="Azevedo V."/>
            <person name="Ehrlich S.D."/>
            <person name="Serror P."/>
        </authorList>
    </citation>
    <scope>NUCLEOTIDE SEQUENCE [GENOMIC DNA]</scope>
    <source>
        <strain>168 / Marburg / ATCC 6051 / DSM 10 / JCM 1465 / NBRC 13719 / NCIMB 3610 / NRRL NRS-744 / VKM B-501</strain>
    </source>
</reference>
<reference key="2">
    <citation type="journal article" date="1992" name="J. Bacteriol.">
        <title>Isolation and sequence analysis of dacB, which encodes a sporulation-specific penicillin-binding protein in Bacillus subtilis.</title>
        <authorList>
            <person name="Buchanan C.E."/>
            <person name="Ling M.-L."/>
        </authorList>
    </citation>
    <scope>NUCLEOTIDE SEQUENCE [GENOMIC DNA]</scope>
</reference>
<reference key="3">
    <citation type="journal article" date="1997" name="Nature">
        <title>The complete genome sequence of the Gram-positive bacterium Bacillus subtilis.</title>
        <authorList>
            <person name="Kunst F."/>
            <person name="Ogasawara N."/>
            <person name="Moszer I."/>
            <person name="Albertini A.M."/>
            <person name="Alloni G."/>
            <person name="Azevedo V."/>
            <person name="Bertero M.G."/>
            <person name="Bessieres P."/>
            <person name="Bolotin A."/>
            <person name="Borchert S."/>
            <person name="Borriss R."/>
            <person name="Boursier L."/>
            <person name="Brans A."/>
            <person name="Braun M."/>
            <person name="Brignell S.C."/>
            <person name="Bron S."/>
            <person name="Brouillet S."/>
            <person name="Bruschi C.V."/>
            <person name="Caldwell B."/>
            <person name="Capuano V."/>
            <person name="Carter N.M."/>
            <person name="Choi S.-K."/>
            <person name="Codani J.-J."/>
            <person name="Connerton I.F."/>
            <person name="Cummings N.J."/>
            <person name="Daniel R.A."/>
            <person name="Denizot F."/>
            <person name="Devine K.M."/>
            <person name="Duesterhoeft A."/>
            <person name="Ehrlich S.D."/>
            <person name="Emmerson P.T."/>
            <person name="Entian K.-D."/>
            <person name="Errington J."/>
            <person name="Fabret C."/>
            <person name="Ferrari E."/>
            <person name="Foulger D."/>
            <person name="Fritz C."/>
            <person name="Fujita M."/>
            <person name="Fujita Y."/>
            <person name="Fuma S."/>
            <person name="Galizzi A."/>
            <person name="Galleron N."/>
            <person name="Ghim S.-Y."/>
            <person name="Glaser P."/>
            <person name="Goffeau A."/>
            <person name="Golightly E.J."/>
            <person name="Grandi G."/>
            <person name="Guiseppi G."/>
            <person name="Guy B.J."/>
            <person name="Haga K."/>
            <person name="Haiech J."/>
            <person name="Harwood C.R."/>
            <person name="Henaut A."/>
            <person name="Hilbert H."/>
            <person name="Holsappel S."/>
            <person name="Hosono S."/>
            <person name="Hullo M.-F."/>
            <person name="Itaya M."/>
            <person name="Jones L.-M."/>
            <person name="Joris B."/>
            <person name="Karamata D."/>
            <person name="Kasahara Y."/>
            <person name="Klaerr-Blanchard M."/>
            <person name="Klein C."/>
            <person name="Kobayashi Y."/>
            <person name="Koetter P."/>
            <person name="Koningstein G."/>
            <person name="Krogh S."/>
            <person name="Kumano M."/>
            <person name="Kurita K."/>
            <person name="Lapidus A."/>
            <person name="Lardinois S."/>
            <person name="Lauber J."/>
            <person name="Lazarevic V."/>
            <person name="Lee S.-M."/>
            <person name="Levine A."/>
            <person name="Liu H."/>
            <person name="Masuda S."/>
            <person name="Mauel C."/>
            <person name="Medigue C."/>
            <person name="Medina N."/>
            <person name="Mellado R.P."/>
            <person name="Mizuno M."/>
            <person name="Moestl D."/>
            <person name="Nakai S."/>
            <person name="Noback M."/>
            <person name="Noone D."/>
            <person name="O'Reilly M."/>
            <person name="Ogawa K."/>
            <person name="Ogiwara A."/>
            <person name="Oudega B."/>
            <person name="Park S.-H."/>
            <person name="Parro V."/>
            <person name="Pohl T.M."/>
            <person name="Portetelle D."/>
            <person name="Porwollik S."/>
            <person name="Prescott A.M."/>
            <person name="Presecan E."/>
            <person name="Pujic P."/>
            <person name="Purnelle B."/>
            <person name="Rapoport G."/>
            <person name="Rey M."/>
            <person name="Reynolds S."/>
            <person name="Rieger M."/>
            <person name="Rivolta C."/>
            <person name="Rocha E."/>
            <person name="Roche B."/>
            <person name="Rose M."/>
            <person name="Sadaie Y."/>
            <person name="Sato T."/>
            <person name="Scanlan E."/>
            <person name="Schleich S."/>
            <person name="Schroeter R."/>
            <person name="Scoffone F."/>
            <person name="Sekiguchi J."/>
            <person name="Sekowska A."/>
            <person name="Seror S.J."/>
            <person name="Serror P."/>
            <person name="Shin B.-S."/>
            <person name="Soldo B."/>
            <person name="Sorokin A."/>
            <person name="Tacconi E."/>
            <person name="Takagi T."/>
            <person name="Takahashi H."/>
            <person name="Takemaru K."/>
            <person name="Takeuchi M."/>
            <person name="Tamakoshi A."/>
            <person name="Tanaka T."/>
            <person name="Terpstra P."/>
            <person name="Tognoni A."/>
            <person name="Tosato V."/>
            <person name="Uchiyama S."/>
            <person name="Vandenbol M."/>
            <person name="Vannier F."/>
            <person name="Vassarotti A."/>
            <person name="Viari A."/>
            <person name="Wambutt R."/>
            <person name="Wedler E."/>
            <person name="Wedler H."/>
            <person name="Weitzenegger T."/>
            <person name="Winters P."/>
            <person name="Wipat A."/>
            <person name="Yamamoto H."/>
            <person name="Yamane K."/>
            <person name="Yasumoto K."/>
            <person name="Yata K."/>
            <person name="Yoshida K."/>
            <person name="Yoshikawa H.-F."/>
            <person name="Zumstein E."/>
            <person name="Yoshikawa H."/>
            <person name="Danchin A."/>
        </authorList>
    </citation>
    <scope>NUCLEOTIDE SEQUENCE [LARGE SCALE GENOMIC DNA]</scope>
    <source>
        <strain>168</strain>
    </source>
</reference>
<reference key="4">
    <citation type="journal article" date="1995" name="J. Bacteriol.">
        <title>The Bacillus subtilis dacB gene, encoding penicillin-binding protein 5*, is part of a three-gene operon required for proper spore cortex synthesis and spore core dehydration.</title>
        <authorList>
            <person name="Popham D.L."/>
            <person name="Illades-Auiar B."/>
            <person name="Setlow P."/>
        </authorList>
    </citation>
    <scope>CHARACTERIZATION</scope>
</reference>
<sequence>MVNIIWVSLTVIGLVFAMCNGTLQDVNEAVFKGAKEAITISFGLMSVLVFWLGLMKIAEQSGLLDIFSRMCRPFISKLFPDIPPDHPAMGYILSNLMANFFGLGNAATPLGIKAMEQMKKLNGNRSEASRSMITFLAVNTSCITLIPTTVIAVRMAYSSKTPTDIVGPSILATLISGIGAIIIDRYFYYRRKKKGR</sequence>
<protein>
    <recommendedName>
        <fullName>Spore maturation protein A</fullName>
    </recommendedName>
</protein>
<organism>
    <name type="scientific">Bacillus subtilis (strain 168)</name>
    <dbReference type="NCBI Taxonomy" id="224308"/>
    <lineage>
        <taxon>Bacteria</taxon>
        <taxon>Bacillati</taxon>
        <taxon>Bacillota</taxon>
        <taxon>Bacilli</taxon>
        <taxon>Bacillales</taxon>
        <taxon>Bacillaceae</taxon>
        <taxon>Bacillus</taxon>
    </lineage>
</organism>
<comment type="function">
    <text>Involved in spore core dehydration; might be involved in the transport of something into or out of the forespore or could be required for some modification of the cortex peptidoglycan structure.</text>
</comment>
<comment type="subcellular location">
    <subcellularLocation>
        <location evidence="2">Cell membrane</location>
        <topology evidence="2">Multi-pass membrane protein</topology>
    </subcellularLocation>
</comment>
<comment type="sequence caution" evidence="2">
    <conflict type="frameshift">
        <sequence resource="EMBL" id="M84227"/>
    </conflict>
</comment>